<proteinExistence type="inferred from homology"/>
<name>HIS9_SCHPO</name>
<reference key="1">
    <citation type="journal article" date="2002" name="Nature">
        <title>The genome sequence of Schizosaccharomyces pombe.</title>
        <authorList>
            <person name="Wood V."/>
            <person name="Gwilliam R."/>
            <person name="Rajandream M.A."/>
            <person name="Lyne M.H."/>
            <person name="Lyne R."/>
            <person name="Stewart A."/>
            <person name="Sgouros J.G."/>
            <person name="Peat N."/>
            <person name="Hayles J."/>
            <person name="Baker S.G."/>
            <person name="Basham D."/>
            <person name="Bowman S."/>
            <person name="Brooks K."/>
            <person name="Brown D."/>
            <person name="Brown S."/>
            <person name="Chillingworth T."/>
            <person name="Churcher C.M."/>
            <person name="Collins M."/>
            <person name="Connor R."/>
            <person name="Cronin A."/>
            <person name="Davis P."/>
            <person name="Feltwell T."/>
            <person name="Fraser A."/>
            <person name="Gentles S."/>
            <person name="Goble A."/>
            <person name="Hamlin N."/>
            <person name="Harris D.E."/>
            <person name="Hidalgo J."/>
            <person name="Hodgson G."/>
            <person name="Holroyd S."/>
            <person name="Hornsby T."/>
            <person name="Howarth S."/>
            <person name="Huckle E.J."/>
            <person name="Hunt S."/>
            <person name="Jagels K."/>
            <person name="James K.D."/>
            <person name="Jones L."/>
            <person name="Jones M."/>
            <person name="Leather S."/>
            <person name="McDonald S."/>
            <person name="McLean J."/>
            <person name="Mooney P."/>
            <person name="Moule S."/>
            <person name="Mungall K.L."/>
            <person name="Murphy L.D."/>
            <person name="Niblett D."/>
            <person name="Odell C."/>
            <person name="Oliver K."/>
            <person name="O'Neil S."/>
            <person name="Pearson D."/>
            <person name="Quail M.A."/>
            <person name="Rabbinowitsch E."/>
            <person name="Rutherford K.M."/>
            <person name="Rutter S."/>
            <person name="Saunders D."/>
            <person name="Seeger K."/>
            <person name="Sharp S."/>
            <person name="Skelton J."/>
            <person name="Simmonds M.N."/>
            <person name="Squares R."/>
            <person name="Squares S."/>
            <person name="Stevens K."/>
            <person name="Taylor K."/>
            <person name="Taylor R.G."/>
            <person name="Tivey A."/>
            <person name="Walsh S.V."/>
            <person name="Warren T."/>
            <person name="Whitehead S."/>
            <person name="Woodward J.R."/>
            <person name="Volckaert G."/>
            <person name="Aert R."/>
            <person name="Robben J."/>
            <person name="Grymonprez B."/>
            <person name="Weltjens I."/>
            <person name="Vanstreels E."/>
            <person name="Rieger M."/>
            <person name="Schaefer M."/>
            <person name="Mueller-Auer S."/>
            <person name="Gabel C."/>
            <person name="Fuchs M."/>
            <person name="Duesterhoeft A."/>
            <person name="Fritzc C."/>
            <person name="Holzer E."/>
            <person name="Moestl D."/>
            <person name="Hilbert H."/>
            <person name="Borzym K."/>
            <person name="Langer I."/>
            <person name="Beck A."/>
            <person name="Lehrach H."/>
            <person name="Reinhardt R."/>
            <person name="Pohl T.M."/>
            <person name="Eger P."/>
            <person name="Zimmermann W."/>
            <person name="Wedler H."/>
            <person name="Wambutt R."/>
            <person name="Purnelle B."/>
            <person name="Goffeau A."/>
            <person name="Cadieu E."/>
            <person name="Dreano S."/>
            <person name="Gloux S."/>
            <person name="Lelaure V."/>
            <person name="Mottier S."/>
            <person name="Galibert F."/>
            <person name="Aves S.J."/>
            <person name="Xiang Z."/>
            <person name="Hunt C."/>
            <person name="Moore K."/>
            <person name="Hurst S.M."/>
            <person name="Lucas M."/>
            <person name="Rochet M."/>
            <person name="Gaillardin C."/>
            <person name="Tallada V.A."/>
            <person name="Garzon A."/>
            <person name="Thode G."/>
            <person name="Daga R.R."/>
            <person name="Cruzado L."/>
            <person name="Jimenez J."/>
            <person name="Sanchez M."/>
            <person name="del Rey F."/>
            <person name="Benito J."/>
            <person name="Dominguez A."/>
            <person name="Revuelta J.L."/>
            <person name="Moreno S."/>
            <person name="Armstrong J."/>
            <person name="Forsburg S.L."/>
            <person name="Cerutti L."/>
            <person name="Lowe T."/>
            <person name="McCombie W.R."/>
            <person name="Paulsen I."/>
            <person name="Potashkin J."/>
            <person name="Shpakovski G.V."/>
            <person name="Ussery D."/>
            <person name="Barrell B.G."/>
            <person name="Nurse P."/>
        </authorList>
    </citation>
    <scope>NUCLEOTIDE SEQUENCE [LARGE SCALE GENOMIC DNA]</scope>
    <source>
        <strain>972 / ATCC 24843</strain>
    </source>
</reference>
<accession>O14059</accession>
<organism>
    <name type="scientific">Schizosaccharomyces pombe (strain 972 / ATCC 24843)</name>
    <name type="common">Fission yeast</name>
    <dbReference type="NCBI Taxonomy" id="284812"/>
    <lineage>
        <taxon>Eukaryota</taxon>
        <taxon>Fungi</taxon>
        <taxon>Dikarya</taxon>
        <taxon>Ascomycota</taxon>
        <taxon>Taphrinomycotina</taxon>
        <taxon>Schizosaccharomycetes</taxon>
        <taxon>Schizosaccharomycetales</taxon>
        <taxon>Schizosaccharomycetaceae</taxon>
        <taxon>Schizosaccharomyces</taxon>
    </lineage>
</organism>
<feature type="chain" id="PRO_0000122321" description="Probable histidinol-phosphatase">
    <location>
        <begin position="1"/>
        <end position="306"/>
    </location>
</feature>
<comment type="catalytic activity">
    <reaction>
        <text>L-histidinol phosphate + H2O = L-histidinol + phosphate</text>
        <dbReference type="Rhea" id="RHEA:14465"/>
        <dbReference type="ChEBI" id="CHEBI:15377"/>
        <dbReference type="ChEBI" id="CHEBI:43474"/>
        <dbReference type="ChEBI" id="CHEBI:57699"/>
        <dbReference type="ChEBI" id="CHEBI:57980"/>
        <dbReference type="EC" id="3.1.3.15"/>
    </reaction>
</comment>
<comment type="pathway">
    <text>Amino-acid biosynthesis; L-histidine biosynthesis; L-histidine from 5-phospho-alpha-D-ribose 1-diphosphate: step 8/9.</text>
</comment>
<comment type="similarity">
    <text evidence="1">Belongs to the PHP hydrolase family. HisK subfamily.</text>
</comment>
<keyword id="KW-0028">Amino-acid biosynthesis</keyword>
<keyword id="KW-0368">Histidine biosynthesis</keyword>
<keyword id="KW-0378">Hydrolase</keyword>
<keyword id="KW-1185">Reference proteome</keyword>
<evidence type="ECO:0000305" key="1"/>
<gene>
    <name type="ORF">SPCC1672.01</name>
</gene>
<sequence>MPISSHSHSGQFCLHAQGKLEDVIQEAIQQGFQSFSFTEHTPRDRVEDLYPEELHLQPEDLFKTFDEYVNEARRLKQNYGDQINILIGAETEYIRPESVELLKSLNTKYNLDYFVGSVHHVNSIPIDFSPELWQKALQHVGNNPEQLFIDYFEHQYDLMQRLHPLVIGHFDLICLFAPEDAKEVFKNSKSVWELIQRNIKYAVSYGGIFEINTSAFRKGWKTAYPQQRLLELMVEQGAQLTLSDDSHGPHQVGLNYHLAKSYLDKCGITSLCMIEKGPDGNGTVVKNVTVDNVWSKFVGTNGITNT</sequence>
<dbReference type="EC" id="3.1.3.15"/>
<dbReference type="EMBL" id="CU329672">
    <property type="protein sequence ID" value="CAA20439.1"/>
    <property type="molecule type" value="Genomic_DNA"/>
</dbReference>
<dbReference type="PIR" id="T41045">
    <property type="entry name" value="T41045"/>
</dbReference>
<dbReference type="RefSeq" id="NP_587872.3">
    <property type="nucleotide sequence ID" value="NM_001022864.3"/>
</dbReference>
<dbReference type="SMR" id="O14059"/>
<dbReference type="FunCoup" id="O14059">
    <property type="interactions" value="107"/>
</dbReference>
<dbReference type="STRING" id="284812.O14059"/>
<dbReference type="iPTMnet" id="O14059"/>
<dbReference type="PaxDb" id="4896-SPCC1672.01.1"/>
<dbReference type="EnsemblFungi" id="SPCC1672.01.1">
    <property type="protein sequence ID" value="SPCC1672.01.1:pep"/>
    <property type="gene ID" value="SPCC1672.01"/>
</dbReference>
<dbReference type="PomBase" id="SPCC1672.01"/>
<dbReference type="VEuPathDB" id="FungiDB:SPCC1672.01"/>
<dbReference type="eggNOG" id="ENOG502RXUQ">
    <property type="taxonomic scope" value="Eukaryota"/>
</dbReference>
<dbReference type="HOGENOM" id="CLU_054611_0_0_1"/>
<dbReference type="InParanoid" id="O14059"/>
<dbReference type="OMA" id="DYDRPMY"/>
<dbReference type="PhylomeDB" id="O14059"/>
<dbReference type="UniPathway" id="UPA00031">
    <property type="reaction ID" value="UER00013"/>
</dbReference>
<dbReference type="PRO" id="PR:O14059"/>
<dbReference type="Proteomes" id="UP000002485">
    <property type="component" value="Chromosome III"/>
</dbReference>
<dbReference type="GO" id="GO:0005829">
    <property type="term" value="C:cytosol"/>
    <property type="evidence" value="ECO:0007005"/>
    <property type="project" value="PomBase"/>
</dbReference>
<dbReference type="GO" id="GO:0005634">
    <property type="term" value="C:nucleus"/>
    <property type="evidence" value="ECO:0007005"/>
    <property type="project" value="PomBase"/>
</dbReference>
<dbReference type="GO" id="GO:0004401">
    <property type="term" value="F:histidinol-phosphatase activity"/>
    <property type="evidence" value="ECO:0000318"/>
    <property type="project" value="GO_Central"/>
</dbReference>
<dbReference type="GO" id="GO:0000105">
    <property type="term" value="P:L-histidine biosynthetic process"/>
    <property type="evidence" value="ECO:0000318"/>
    <property type="project" value="GO_Central"/>
</dbReference>
<dbReference type="CDD" id="cd12110">
    <property type="entry name" value="PHP_HisPPase_Hisj_like"/>
    <property type="match status" value="1"/>
</dbReference>
<dbReference type="FunFam" id="3.20.20.140:FF:000059">
    <property type="entry name" value="Histidinol-phosphatase"/>
    <property type="match status" value="1"/>
</dbReference>
<dbReference type="Gene3D" id="3.20.20.140">
    <property type="entry name" value="Metal-dependent hydrolases"/>
    <property type="match status" value="1"/>
</dbReference>
<dbReference type="InterPro" id="IPR010140">
    <property type="entry name" value="Histidinol_P_phosphatase_HisJ"/>
</dbReference>
<dbReference type="InterPro" id="IPR004013">
    <property type="entry name" value="PHP_dom"/>
</dbReference>
<dbReference type="InterPro" id="IPR016195">
    <property type="entry name" value="Pol/histidinol_Pase-like"/>
</dbReference>
<dbReference type="NCBIfam" id="TIGR01856">
    <property type="entry name" value="hisJ_fam"/>
    <property type="match status" value="1"/>
</dbReference>
<dbReference type="PANTHER" id="PTHR21039">
    <property type="entry name" value="HISTIDINOL PHOSPHATASE-RELATED"/>
    <property type="match status" value="1"/>
</dbReference>
<dbReference type="PANTHER" id="PTHR21039:SF0">
    <property type="entry name" value="HISTIDINOL-PHOSPHATASE"/>
    <property type="match status" value="1"/>
</dbReference>
<dbReference type="Pfam" id="PF02811">
    <property type="entry name" value="PHP"/>
    <property type="match status" value="1"/>
</dbReference>
<dbReference type="SUPFAM" id="SSF89550">
    <property type="entry name" value="PHP domain-like"/>
    <property type="match status" value="1"/>
</dbReference>
<protein>
    <recommendedName>
        <fullName>Probable histidinol-phosphatase</fullName>
        <shortName>HolPase</shortName>
        <ecNumber>3.1.3.15</ecNumber>
    </recommendedName>
</protein>